<dbReference type="EC" id="1.14.-.-" evidence="1"/>
<dbReference type="EMBL" id="KZ559171">
    <property type="protein sequence ID" value="PLB34859.1"/>
    <property type="molecule type" value="Genomic_DNA"/>
</dbReference>
<dbReference type="SMR" id="A0A2I2F2M7"/>
<dbReference type="OrthoDB" id="4407678at2759"/>
<dbReference type="UniPathway" id="UPA00154"/>
<dbReference type="Proteomes" id="UP000234585">
    <property type="component" value="Unassembled WGS sequence"/>
</dbReference>
<dbReference type="GO" id="GO:0016491">
    <property type="term" value="F:oxidoreductase activity"/>
    <property type="evidence" value="ECO:0007669"/>
    <property type="project" value="UniProtKB-KW"/>
</dbReference>
<dbReference type="GO" id="GO:0009813">
    <property type="term" value="P:flavonoid biosynthetic process"/>
    <property type="evidence" value="ECO:0007669"/>
    <property type="project" value="UniProtKB-UniPathway"/>
</dbReference>
<dbReference type="Gene3D" id="3.40.50.360">
    <property type="match status" value="1"/>
</dbReference>
<dbReference type="InterPro" id="IPR029039">
    <property type="entry name" value="Flavoprotein-like_sf"/>
</dbReference>
<dbReference type="InterPro" id="IPR005025">
    <property type="entry name" value="FMN_Rdtase-like_dom"/>
</dbReference>
<dbReference type="Pfam" id="PF03358">
    <property type="entry name" value="FMN_red"/>
    <property type="match status" value="1"/>
</dbReference>
<dbReference type="SUPFAM" id="SSF52218">
    <property type="entry name" value="Flavoproteins"/>
    <property type="match status" value="1"/>
</dbReference>
<gene>
    <name evidence="2" type="primary">cfojA</name>
    <name type="ORF">BDW47DRAFT_111386</name>
</gene>
<accession>A0A2I2F2M7</accession>
<protein>
    <recommendedName>
        <fullName evidence="2">Flavone synthase cfoJ</fullName>
        <shortName evidence="2">FNS cfoJ</shortName>
        <ecNumber evidence="1">1.14.-.-</ecNumber>
    </recommendedName>
    <alternativeName>
        <fullName evidence="2">Chlorflavonin biosynthesis cluster protein J</fullName>
    </alternativeName>
    <alternativeName>
        <fullName evidence="2">FMN-dependent oxidoreductase cfoJ</fullName>
    </alternativeName>
</protein>
<proteinExistence type="evidence at protein level"/>
<evidence type="ECO:0000269" key="1">
    <source>
    </source>
</evidence>
<evidence type="ECO:0000303" key="2">
    <source>
    </source>
</evidence>
<evidence type="ECO:0000305" key="3"/>
<keyword id="KW-0284">Flavonoid biosynthesis</keyword>
<keyword id="KW-0285">Flavoprotein</keyword>
<keyword id="KW-0288">FMN</keyword>
<keyword id="KW-0520">NAD</keyword>
<keyword id="KW-0560">Oxidoreductase</keyword>
<keyword id="KW-1185">Reference proteome</keyword>
<sequence length="323" mass="34384">MRFLGISGGSAGGNTEQALLAALRAAQTAAKTPATISLVRLKELSIGSGALDGHLPLPVVGKSNSTGPVSDDRPFILDQIMEADAIILGAPCITRTIPWEVKCFQDSTLGPFQDVTMAQKLVDAGKGHLVDQRIFKPRVLALVTLGGAFTTEWAPFTLPLLHQVFFPLGTQIVDQMQVFGTGVPDSFLLNSEAMVRAEELGRNLAQQAQATTEGEATYVGPRGMCPICHLSMFNFVGRDAVECATCGAKGRMGVGDDGHVEFVTDSEGESFSVLRRSGLKKHLQDLEQGLQAEGASTKVLDIKNELLKLGQSWVVAPPSRGGR</sequence>
<name>CFOJ_ASPCN</name>
<organism>
    <name type="scientific">Aspergillus candidus</name>
    <dbReference type="NCBI Taxonomy" id="41067"/>
    <lineage>
        <taxon>Eukaryota</taxon>
        <taxon>Fungi</taxon>
        <taxon>Dikarya</taxon>
        <taxon>Ascomycota</taxon>
        <taxon>Pezizomycotina</taxon>
        <taxon>Eurotiomycetes</taxon>
        <taxon>Eurotiomycetidae</taxon>
        <taxon>Eurotiales</taxon>
        <taxon>Aspergillaceae</taxon>
        <taxon>Aspergillus</taxon>
        <taxon>Aspergillus subgen. Circumdati</taxon>
    </lineage>
</organism>
<feature type="chain" id="PRO_0000459541" description="Flavone synthase cfoJ">
    <location>
        <begin position="1"/>
        <end position="323"/>
    </location>
</feature>
<comment type="function">
    <text evidence="1">FMN-dependent oxidoreductase; part of the gene cluster that mediates the biosynthesis of chlorflavonin, a fungal flavonoid with acetolactate synthase inhibitory activity (PubMed:36704842). Within the pathway, cfoJ acts as a flavone synthase (FNS) and catalyzes the formation of a double bond between C2 and C3, converting the flavanone into a flavone (PubMed:36704842). The pathway begins with the PKS-NRPS hybrid synthetase cfoA that uses benzoic acid or p-hydroxybenzoic acid as a starter unit with four rounds of chain elongation using malonyl-CoA to form the chalcone skeleton. Then, a new type of chalcone isomerase, cfoK, catalyzes the conversion of the chalcone into a flavanone by a histidine-mediated oxa-Michael addition mechanism. The desaturation of flavanone to flavone is catalyzed by a new type of flavone synthase, the flavin mononucleotide (FMN)-dependent oxidoreductase cfoJ. Monooxygenases cfoF, cfoG, and P450 cfoH are responsible for the hydroxylation of the flavonoid skeleton at sites C3, C8, and C2', respectively. Like cfoF, the dehydratase cfoI plays also a role in the hydroxylation of position C3. Methyltransferases cfoB, cfoC, and cfoD then catalyze the methylation of C7-OH, C8-OH, and C3-OH, respectively. Finally, the monooxygenase cfoE is responsible for the chlorination of flavonoid at position C3' (PubMed:36704842).</text>
</comment>
<comment type="cofactor">
    <cofactor evidence="3">
        <name>FMN</name>
        <dbReference type="ChEBI" id="CHEBI:58210"/>
    </cofactor>
</comment>
<comment type="pathway">
    <text evidence="1">Secondary metabolite biosynthesis; flavonoid biosynthesis.</text>
</comment>
<comment type="disruption phenotype">
    <text evidence="1">Results in the accumulation of intermediates that all bear a hydroxy substituent in the C ring and lack a double bond between C2 and C3.</text>
</comment>
<reference key="1">
    <citation type="submission" date="2017-12" db="EMBL/GenBank/DDBJ databases">
        <authorList>
            <consortium name="DOE Joint Genome Institute"/>
            <person name="Haridas S."/>
            <person name="Kjaerbolling I."/>
            <person name="Vesth T.C."/>
            <person name="Frisvad J.C."/>
            <person name="Nybo J.L."/>
            <person name="Theobald S."/>
            <person name="Kuo A."/>
            <person name="Bowyer P."/>
            <person name="Matsuda Y."/>
            <person name="Mondo S."/>
            <person name="Lyhne E.K."/>
            <person name="Kogle M.E."/>
            <person name="Clum A."/>
            <person name="Lipzen A."/>
            <person name="Salamov A."/>
            <person name="Ngan C.Y."/>
            <person name="Daum C."/>
            <person name="Chiniquy J."/>
            <person name="Barry K."/>
            <person name="LaButti K."/>
            <person name="Simmons B.A."/>
            <person name="Magnuson J.K."/>
            <person name="Mortensen U.H."/>
            <person name="Larsen T.O."/>
            <person name="Grigoriev I.V."/>
            <person name="Baker S.E."/>
            <person name="Andersen M.R."/>
            <person name="Nordberg H.P."/>
            <person name="Cantor M.N."/>
            <person name="Hua S.X."/>
        </authorList>
    </citation>
    <scope>NUCLEOTIDE SEQUENCE [LARGE SCALE GENOMIC DNA]</scope>
    <source>
        <strain>CBS 102.13</strain>
    </source>
</reference>
<reference key="2">
    <citation type="journal article" date="2023" name="Angew. Chem. Int. Ed.">
        <title>Discovery of a Unique Flavonoid Biosynthesis Mechanism in Fungi by Genome Mining.</title>
        <authorList>
            <person name="Zhang W."/>
            <person name="Zhang X."/>
            <person name="Feng D."/>
            <person name="Liang Y."/>
            <person name="Wu Z."/>
            <person name="Du S."/>
            <person name="Zhou Y."/>
            <person name="Geng C."/>
            <person name="Men P."/>
            <person name="Fu C."/>
            <person name="Huang X."/>
            <person name="Lu X."/>
        </authorList>
    </citation>
    <scope>FUNCTION</scope>
    <scope>CATALYTIC ACTIVITY</scope>
    <scope>DISRUPTION PHENOTYPE</scope>
    <scope>PATHWAY</scope>
</reference>